<evidence type="ECO:0000250" key="1"/>
<evidence type="ECO:0000250" key="2">
    <source>
        <dbReference type="UniProtKB" id="P0A817"/>
    </source>
</evidence>
<evidence type="ECO:0000250" key="3">
    <source>
        <dbReference type="UniProtKB" id="P13444"/>
    </source>
</evidence>
<evidence type="ECO:0000250" key="4">
    <source>
        <dbReference type="UniProtKB" id="Q00266"/>
    </source>
</evidence>
<evidence type="ECO:0000250" key="5">
    <source>
        <dbReference type="UniProtKB" id="Q96551"/>
    </source>
</evidence>
<evidence type="ECO:0000269" key="6">
    <source ref="1"/>
</evidence>
<evidence type="ECO:0000305" key="7"/>
<protein>
    <recommendedName>
        <fullName>S-adenosylmethionine synthase 2</fullName>
        <shortName>AdoMet synthase 2</shortName>
        <ecNumber evidence="5">2.5.1.6</ecNumber>
    </recommendedName>
    <alternativeName>
        <fullName>Methionine adenosyltransferase 2</fullName>
        <shortName>MAT 2</shortName>
    </alternativeName>
</protein>
<dbReference type="EC" id="2.5.1.6" evidence="5"/>
<dbReference type="EMBL" id="AF271220">
    <property type="protein sequence ID" value="AAG17666.1"/>
    <property type="molecule type" value="Genomic_DNA"/>
</dbReference>
<dbReference type="SMR" id="Q9FUZ1"/>
<dbReference type="UniPathway" id="UPA00315">
    <property type="reaction ID" value="UER00080"/>
</dbReference>
<dbReference type="GO" id="GO:0005737">
    <property type="term" value="C:cytoplasm"/>
    <property type="evidence" value="ECO:0007669"/>
    <property type="project" value="UniProtKB-SubCell"/>
</dbReference>
<dbReference type="GO" id="GO:0005524">
    <property type="term" value="F:ATP binding"/>
    <property type="evidence" value="ECO:0007669"/>
    <property type="project" value="UniProtKB-KW"/>
</dbReference>
<dbReference type="GO" id="GO:0046872">
    <property type="term" value="F:metal ion binding"/>
    <property type="evidence" value="ECO:0007669"/>
    <property type="project" value="UniProtKB-KW"/>
</dbReference>
<dbReference type="GO" id="GO:0004478">
    <property type="term" value="F:methionine adenosyltransferase activity"/>
    <property type="evidence" value="ECO:0007669"/>
    <property type="project" value="UniProtKB-EC"/>
</dbReference>
<dbReference type="GO" id="GO:0006730">
    <property type="term" value="P:one-carbon metabolic process"/>
    <property type="evidence" value="ECO:0007669"/>
    <property type="project" value="UniProtKB-KW"/>
</dbReference>
<dbReference type="GO" id="GO:0006556">
    <property type="term" value="P:S-adenosylmethionine biosynthetic process"/>
    <property type="evidence" value="ECO:0007669"/>
    <property type="project" value="UniProtKB-UniPathway"/>
</dbReference>
<dbReference type="CDD" id="cd18079">
    <property type="entry name" value="S-AdoMet_synt"/>
    <property type="match status" value="1"/>
</dbReference>
<dbReference type="FunFam" id="3.30.300.10:FF:000003">
    <property type="entry name" value="S-adenosylmethionine synthase"/>
    <property type="match status" value="1"/>
</dbReference>
<dbReference type="FunFam" id="3.30.300.10:FF:000004">
    <property type="entry name" value="S-adenosylmethionine synthase"/>
    <property type="match status" value="1"/>
</dbReference>
<dbReference type="FunFam" id="3.30.300.10:FF:000011">
    <property type="entry name" value="S-adenosylmethionine synthase"/>
    <property type="match status" value="1"/>
</dbReference>
<dbReference type="FunFam" id="3.30.300.10:FF:000021">
    <property type="entry name" value="S-adenosylmethionine synthetase 1"/>
    <property type="match status" value="1"/>
</dbReference>
<dbReference type="Gene3D" id="3.30.300.10">
    <property type="match status" value="3"/>
</dbReference>
<dbReference type="HAMAP" id="MF_00086">
    <property type="entry name" value="S_AdoMet_synth1"/>
    <property type="match status" value="1"/>
</dbReference>
<dbReference type="InterPro" id="IPR022631">
    <property type="entry name" value="ADOMET_SYNTHASE_CS"/>
</dbReference>
<dbReference type="InterPro" id="IPR022630">
    <property type="entry name" value="S-AdoMet_synt_C"/>
</dbReference>
<dbReference type="InterPro" id="IPR022629">
    <property type="entry name" value="S-AdoMet_synt_central"/>
</dbReference>
<dbReference type="InterPro" id="IPR022628">
    <property type="entry name" value="S-AdoMet_synt_N"/>
</dbReference>
<dbReference type="InterPro" id="IPR002133">
    <property type="entry name" value="S-AdoMet_synthetase"/>
</dbReference>
<dbReference type="InterPro" id="IPR022636">
    <property type="entry name" value="S-AdoMet_synthetase_sfam"/>
</dbReference>
<dbReference type="NCBIfam" id="TIGR01034">
    <property type="entry name" value="metK"/>
    <property type="match status" value="1"/>
</dbReference>
<dbReference type="PANTHER" id="PTHR11964">
    <property type="entry name" value="S-ADENOSYLMETHIONINE SYNTHETASE"/>
    <property type="match status" value="1"/>
</dbReference>
<dbReference type="Pfam" id="PF02773">
    <property type="entry name" value="S-AdoMet_synt_C"/>
    <property type="match status" value="1"/>
</dbReference>
<dbReference type="Pfam" id="PF02772">
    <property type="entry name" value="S-AdoMet_synt_M"/>
    <property type="match status" value="1"/>
</dbReference>
<dbReference type="Pfam" id="PF00438">
    <property type="entry name" value="S-AdoMet_synt_N"/>
    <property type="match status" value="1"/>
</dbReference>
<dbReference type="PIRSF" id="PIRSF000497">
    <property type="entry name" value="MAT"/>
    <property type="match status" value="1"/>
</dbReference>
<dbReference type="SUPFAM" id="SSF55973">
    <property type="entry name" value="S-adenosylmethionine synthetase"/>
    <property type="match status" value="3"/>
</dbReference>
<dbReference type="PROSITE" id="PS00376">
    <property type="entry name" value="ADOMET_SYNTHASE_1"/>
    <property type="match status" value="1"/>
</dbReference>
<dbReference type="PROSITE" id="PS00377">
    <property type="entry name" value="ADOMET_SYNTHASE_2"/>
    <property type="match status" value="1"/>
</dbReference>
<accession>Q9FUZ1</accession>
<keyword id="KW-0067">ATP-binding</keyword>
<keyword id="KW-0170">Cobalt</keyword>
<keyword id="KW-0963">Cytoplasm</keyword>
<keyword id="KW-0460">Magnesium</keyword>
<keyword id="KW-0479">Metal-binding</keyword>
<keyword id="KW-0547">Nucleotide-binding</keyword>
<keyword id="KW-0554">One-carbon metabolism</keyword>
<keyword id="KW-0630">Potassium</keyword>
<keyword id="KW-0808">Transferase</keyword>
<organism>
    <name type="scientific">Brassica juncea</name>
    <name type="common">Indian mustard</name>
    <name type="synonym">Sinapis juncea</name>
    <dbReference type="NCBI Taxonomy" id="3707"/>
    <lineage>
        <taxon>Eukaryota</taxon>
        <taxon>Viridiplantae</taxon>
        <taxon>Streptophyta</taxon>
        <taxon>Embryophyta</taxon>
        <taxon>Tracheophyta</taxon>
        <taxon>Spermatophyta</taxon>
        <taxon>Magnoliopsida</taxon>
        <taxon>eudicotyledons</taxon>
        <taxon>Gunneridae</taxon>
        <taxon>Pentapetalae</taxon>
        <taxon>rosids</taxon>
        <taxon>malvids</taxon>
        <taxon>Brassicales</taxon>
        <taxon>Brassicaceae</taxon>
        <taxon>Brassiceae</taxon>
        <taxon>Brassica</taxon>
    </lineage>
</organism>
<proteinExistence type="evidence at transcript level"/>
<feature type="chain" id="PRO_0000363011" description="S-adenosylmethionine synthase 2">
    <location>
        <begin position="1"/>
        <end position="393"/>
    </location>
</feature>
<feature type="binding site" evidence="3">
    <location>
        <position position="9"/>
    </location>
    <ligand>
        <name>Mg(2+)</name>
        <dbReference type="ChEBI" id="CHEBI:18420"/>
    </ligand>
</feature>
<feature type="binding site" description="in other chain" evidence="4">
    <location>
        <position position="15"/>
    </location>
    <ligand>
        <name>ATP</name>
        <dbReference type="ChEBI" id="CHEBI:30616"/>
        <note>ligand shared between two neighboring subunits</note>
    </ligand>
</feature>
<feature type="binding site" evidence="2">
    <location>
        <position position="43"/>
    </location>
    <ligand>
        <name>K(+)</name>
        <dbReference type="ChEBI" id="CHEBI:29103"/>
    </ligand>
</feature>
<feature type="binding site" description="in other chain" evidence="2">
    <location>
        <position position="56"/>
    </location>
    <ligand>
        <name>L-methionine</name>
        <dbReference type="ChEBI" id="CHEBI:57844"/>
        <note>ligand shared between two neighboring subunits</note>
    </ligand>
</feature>
<feature type="binding site" description="in other chain" evidence="2">
    <location>
        <position position="99"/>
    </location>
    <ligand>
        <name>L-methionine</name>
        <dbReference type="ChEBI" id="CHEBI:57844"/>
        <note>ligand shared between two neighboring subunits</note>
    </ligand>
</feature>
<feature type="binding site" description="in other chain" evidence="4">
    <location>
        <begin position="167"/>
        <end position="169"/>
    </location>
    <ligand>
        <name>ATP</name>
        <dbReference type="ChEBI" id="CHEBI:30616"/>
        <note>ligand shared between two neighboring subunits</note>
    </ligand>
</feature>
<feature type="binding site" description="in other chain" evidence="4">
    <location>
        <begin position="235"/>
        <end position="238"/>
    </location>
    <ligand>
        <name>ATP</name>
        <dbReference type="ChEBI" id="CHEBI:30616"/>
        <note>ligand shared between two neighboring subunits</note>
    </ligand>
</feature>
<feature type="binding site" description="in other chain" evidence="4">
    <location>
        <position position="246"/>
    </location>
    <ligand>
        <name>ATP</name>
        <dbReference type="ChEBI" id="CHEBI:30616"/>
        <note>ligand shared between two neighboring subunits</note>
    </ligand>
</feature>
<feature type="binding site" evidence="2">
    <location>
        <position position="246"/>
    </location>
    <ligand>
        <name>L-methionine</name>
        <dbReference type="ChEBI" id="CHEBI:57844"/>
        <note>ligand shared between two neighboring subunits</note>
    </ligand>
</feature>
<feature type="binding site" description="in other chain" evidence="2">
    <location>
        <begin position="252"/>
        <end position="253"/>
    </location>
    <ligand>
        <name>ATP</name>
        <dbReference type="ChEBI" id="CHEBI:30616"/>
        <note>ligand shared between two neighboring subunits</note>
    </ligand>
</feature>
<feature type="binding site" evidence="2">
    <location>
        <position position="269"/>
    </location>
    <ligand>
        <name>ATP</name>
        <dbReference type="ChEBI" id="CHEBI:30616"/>
        <note>ligand shared between two neighboring subunits</note>
    </ligand>
</feature>
<feature type="binding site" evidence="2">
    <location>
        <position position="273"/>
    </location>
    <ligand>
        <name>ATP</name>
        <dbReference type="ChEBI" id="CHEBI:30616"/>
        <note>ligand shared between two neighboring subunits</note>
    </ligand>
</feature>
<feature type="binding site" evidence="3">
    <location>
        <position position="277"/>
    </location>
    <ligand>
        <name>ATP</name>
        <dbReference type="ChEBI" id="CHEBI:30616"/>
        <note>ligand shared between two neighboring subunits</note>
    </ligand>
</feature>
<feature type="binding site" description="in other chain" evidence="2">
    <location>
        <position position="277"/>
    </location>
    <ligand>
        <name>L-methionine</name>
        <dbReference type="ChEBI" id="CHEBI:57844"/>
        <note>ligand shared between two neighboring subunits</note>
    </ligand>
</feature>
<gene>
    <name type="primary">MSAMS2</name>
</gene>
<name>METK2_BRAJU</name>
<sequence length="393" mass="42880">MESFLFTSESVNEGHPDKLCDQISDAILDACLEQDPESKVACETCTKTNMVMVFGEITTKANVDYEKIVRETCREIGFISDDVGLDADNCKVLVNIEQQSPDIAQGVHGHLTKKPEEIGAGDQGHMFGYATDETPELMPLSHVLATKLGAKLTEVRKNGTCAWLRPDGKTQVTVEYFNENGAMVPVRVHTVLISTQHDETVTNDEIAADLKEHVIKPVIPEKYLDEKTIFHLNPSGRFVIGGPHGDAGLTGRKIIIDTYGGWGAHGGGAFSGKDPTKVDRSGAYIVRQAAKSIVASGLARRCIVQVSYAIGVPEPLSVFVDSYGTGKIPDKEILEIVKESFDFRPGMISINLDLKRGGNGRFLKTAAYGHFGRDDADFTWEVVKPLKSNKVQA</sequence>
<reference key="1">
    <citation type="journal article" date="2002" name="Physiol. Plantarum">
        <title>Characterization of S-adenosylmethionine synthetase genes and its expression is associated with ethylene synthesis in mustard (Brassica juncea).</title>
        <authorList>
            <person name="Lim C.-C."/>
            <person name="Liu J.-Z."/>
            <person name="Pua E.-C."/>
        </authorList>
    </citation>
    <scope>NUCLEOTIDE SEQUENCE [MRNA]</scope>
    <scope>INDUCTION</scope>
    <scope>TISSUE SPECIFICITY</scope>
</reference>
<comment type="function">
    <text evidence="5">Catalyzes the formation of S-adenosylmethionine from methionine and ATP. The reaction comprises two steps that are both catalyzed by the same enzyme: formation of S-adenosylmethionine (AdoMet) and triphosphate, and subsequent hydrolysis of the triphosphate.</text>
</comment>
<comment type="catalytic activity">
    <reaction evidence="5">
        <text>L-methionine + ATP + H2O = S-adenosyl-L-methionine + phosphate + diphosphate</text>
        <dbReference type="Rhea" id="RHEA:21080"/>
        <dbReference type="ChEBI" id="CHEBI:15377"/>
        <dbReference type="ChEBI" id="CHEBI:30616"/>
        <dbReference type="ChEBI" id="CHEBI:33019"/>
        <dbReference type="ChEBI" id="CHEBI:43474"/>
        <dbReference type="ChEBI" id="CHEBI:57844"/>
        <dbReference type="ChEBI" id="CHEBI:59789"/>
        <dbReference type="EC" id="2.5.1.6"/>
    </reaction>
</comment>
<comment type="cofactor">
    <cofactor evidence="5">
        <name>Mn(2+)</name>
        <dbReference type="ChEBI" id="CHEBI:29035"/>
    </cofactor>
    <cofactor evidence="5">
        <name>Mg(2+)</name>
        <dbReference type="ChEBI" id="CHEBI:18420"/>
    </cofactor>
    <cofactor evidence="5">
        <name>Co(2+)</name>
        <dbReference type="ChEBI" id="CHEBI:48828"/>
    </cofactor>
    <text evidence="3 5">Binds 2 divalent ions per subunit. The metal ions interact primarily with the substrate (By similarity). Can utilize magnesium, manganese or cobalt (in vitro) (By similarity).</text>
</comment>
<comment type="cofactor">
    <cofactor evidence="5">
        <name>K(+)</name>
        <dbReference type="ChEBI" id="CHEBI:29103"/>
    </cofactor>
    <text evidence="3">Binds 1 potassium ion per subunit. The potassium ion interacts primarily with the substrate (By similarity).</text>
</comment>
<comment type="pathway">
    <text evidence="5">Amino-acid biosynthesis; S-adenosyl-L-methionine biosynthesis; S-adenosyl-L-methionine from L-methionine: step 1/1.</text>
</comment>
<comment type="subunit">
    <text evidence="1">Homotetramer.</text>
</comment>
<comment type="subcellular location">
    <subcellularLocation>
        <location evidence="1">Cytoplasm</location>
    </subcellularLocation>
</comment>
<comment type="tissue specificity">
    <text evidence="6">Mostly expressed in flowers, seedpods and roots, and, to a lower extent, in stems and leaves.</text>
</comment>
<comment type="induction">
    <text evidence="6">By ethylene, polyamines (PAs: putrescine, spermidine and spermine), methylglyoxal (bis-guanyhydrazone) (MGBG), and AgNO(3).</text>
</comment>
<comment type="similarity">
    <text evidence="7">Belongs to the AdoMet synthase family.</text>
</comment>